<comment type="function">
    <text evidence="1">Catalyzes the condensation of pantoate with beta-alanine in an ATP-dependent reaction via a pantoyl-adenylate intermediate.</text>
</comment>
<comment type="catalytic activity">
    <reaction evidence="1">
        <text>(R)-pantoate + beta-alanine + ATP = (R)-pantothenate + AMP + diphosphate + H(+)</text>
        <dbReference type="Rhea" id="RHEA:10912"/>
        <dbReference type="ChEBI" id="CHEBI:15378"/>
        <dbReference type="ChEBI" id="CHEBI:15980"/>
        <dbReference type="ChEBI" id="CHEBI:29032"/>
        <dbReference type="ChEBI" id="CHEBI:30616"/>
        <dbReference type="ChEBI" id="CHEBI:33019"/>
        <dbReference type="ChEBI" id="CHEBI:57966"/>
        <dbReference type="ChEBI" id="CHEBI:456215"/>
        <dbReference type="EC" id="6.3.2.1"/>
    </reaction>
</comment>
<comment type="pathway">
    <text evidence="1">Cofactor biosynthesis; (R)-pantothenate biosynthesis; (R)-pantothenate from (R)-pantoate and beta-alanine: step 1/1.</text>
</comment>
<comment type="subunit">
    <text evidence="1">Homodimer.</text>
</comment>
<comment type="subcellular location">
    <subcellularLocation>
        <location evidence="1">Cytoplasm</location>
    </subcellularLocation>
</comment>
<comment type="miscellaneous">
    <text evidence="1">The reaction proceeds by a bi uni uni bi ping pong mechanism.</text>
</comment>
<comment type="similarity">
    <text evidence="1">Belongs to the pantothenate synthetase family.</text>
</comment>
<feature type="chain" id="PRO_0000305490" description="Pantothenate synthetase">
    <location>
        <begin position="1"/>
        <end position="313"/>
    </location>
</feature>
<feature type="active site" description="Proton donor" evidence="1">
    <location>
        <position position="50"/>
    </location>
</feature>
<feature type="binding site" evidence="1">
    <location>
        <begin position="43"/>
        <end position="50"/>
    </location>
    <ligand>
        <name>ATP</name>
        <dbReference type="ChEBI" id="CHEBI:30616"/>
    </ligand>
</feature>
<feature type="binding site" evidence="1">
    <location>
        <position position="75"/>
    </location>
    <ligand>
        <name>(R)-pantoate</name>
        <dbReference type="ChEBI" id="CHEBI:15980"/>
    </ligand>
</feature>
<feature type="binding site" evidence="1">
    <location>
        <position position="75"/>
    </location>
    <ligand>
        <name>beta-alanine</name>
        <dbReference type="ChEBI" id="CHEBI:57966"/>
    </ligand>
</feature>
<feature type="binding site" evidence="1">
    <location>
        <begin position="161"/>
        <end position="164"/>
    </location>
    <ligand>
        <name>ATP</name>
        <dbReference type="ChEBI" id="CHEBI:30616"/>
    </ligand>
</feature>
<feature type="binding site" evidence="1">
    <location>
        <position position="167"/>
    </location>
    <ligand>
        <name>(R)-pantoate</name>
        <dbReference type="ChEBI" id="CHEBI:15980"/>
    </ligand>
</feature>
<feature type="binding site" evidence="1">
    <location>
        <position position="190"/>
    </location>
    <ligand>
        <name>ATP</name>
        <dbReference type="ChEBI" id="CHEBI:30616"/>
    </ligand>
</feature>
<feature type="binding site" evidence="1">
    <location>
        <begin position="198"/>
        <end position="201"/>
    </location>
    <ligand>
        <name>ATP</name>
        <dbReference type="ChEBI" id="CHEBI:30616"/>
    </ligand>
</feature>
<protein>
    <recommendedName>
        <fullName evidence="1">Pantothenate synthetase</fullName>
        <shortName evidence="1">PS</shortName>
        <ecNumber evidence="1">6.3.2.1</ecNumber>
    </recommendedName>
    <alternativeName>
        <fullName evidence="1">Pantoate--beta-alanine ligase</fullName>
    </alternativeName>
    <alternativeName>
        <fullName evidence="1">Pantoate-activating enzyme</fullName>
    </alternativeName>
</protein>
<gene>
    <name evidence="1" type="primary">panC</name>
    <name type="ordered locus">Mmcs_4762</name>
</gene>
<organism>
    <name type="scientific">Mycobacterium sp. (strain MCS)</name>
    <dbReference type="NCBI Taxonomy" id="164756"/>
    <lineage>
        <taxon>Bacteria</taxon>
        <taxon>Bacillati</taxon>
        <taxon>Actinomycetota</taxon>
        <taxon>Actinomycetes</taxon>
        <taxon>Mycobacteriales</taxon>
        <taxon>Mycobacteriaceae</taxon>
        <taxon>Mycobacterium</taxon>
    </lineage>
</organism>
<keyword id="KW-0067">ATP-binding</keyword>
<keyword id="KW-0963">Cytoplasm</keyword>
<keyword id="KW-0436">Ligase</keyword>
<keyword id="KW-0547">Nucleotide-binding</keyword>
<keyword id="KW-0566">Pantothenate biosynthesis</keyword>
<reference key="1">
    <citation type="submission" date="2006-06" db="EMBL/GenBank/DDBJ databases">
        <title>Complete sequence of chromosome of Mycobacterium sp. MCS.</title>
        <authorList>
            <consortium name="US DOE Joint Genome Institute"/>
            <person name="Copeland A."/>
            <person name="Lucas S."/>
            <person name="Lapidus A."/>
            <person name="Barry K."/>
            <person name="Detter J.C."/>
            <person name="Glavina del Rio T."/>
            <person name="Hammon N."/>
            <person name="Israni S."/>
            <person name="Dalin E."/>
            <person name="Tice H."/>
            <person name="Pitluck S."/>
            <person name="Martinez M."/>
            <person name="Schmutz J."/>
            <person name="Larimer F."/>
            <person name="Land M."/>
            <person name="Hauser L."/>
            <person name="Kyrpides N."/>
            <person name="Kim E."/>
            <person name="Miller C.D."/>
            <person name="Hughes J.E."/>
            <person name="Anderson A.J."/>
            <person name="Sims R.C."/>
            <person name="Richardson P."/>
        </authorList>
    </citation>
    <scope>NUCLEOTIDE SEQUENCE [LARGE SCALE GENOMIC DNA]</scope>
    <source>
        <strain>MCS</strain>
    </source>
</reference>
<accession>Q1B2L8</accession>
<dbReference type="EC" id="6.3.2.1" evidence="1"/>
<dbReference type="EMBL" id="CP000384">
    <property type="protein sequence ID" value="ABG10866.1"/>
    <property type="molecule type" value="Genomic_DNA"/>
</dbReference>
<dbReference type="SMR" id="Q1B2L8"/>
<dbReference type="KEGG" id="mmc:Mmcs_4762"/>
<dbReference type="HOGENOM" id="CLU_047148_0_1_11"/>
<dbReference type="BioCyc" id="MSP164756:G1G6O-4864-MONOMER"/>
<dbReference type="UniPathway" id="UPA00028">
    <property type="reaction ID" value="UER00005"/>
</dbReference>
<dbReference type="GO" id="GO:0005829">
    <property type="term" value="C:cytosol"/>
    <property type="evidence" value="ECO:0007669"/>
    <property type="project" value="TreeGrafter"/>
</dbReference>
<dbReference type="GO" id="GO:0005524">
    <property type="term" value="F:ATP binding"/>
    <property type="evidence" value="ECO:0007669"/>
    <property type="project" value="UniProtKB-KW"/>
</dbReference>
<dbReference type="GO" id="GO:0004592">
    <property type="term" value="F:pantoate-beta-alanine ligase activity"/>
    <property type="evidence" value="ECO:0007669"/>
    <property type="project" value="UniProtKB-UniRule"/>
</dbReference>
<dbReference type="GO" id="GO:0015940">
    <property type="term" value="P:pantothenate biosynthetic process"/>
    <property type="evidence" value="ECO:0007669"/>
    <property type="project" value="UniProtKB-UniRule"/>
</dbReference>
<dbReference type="CDD" id="cd00560">
    <property type="entry name" value="PanC"/>
    <property type="match status" value="1"/>
</dbReference>
<dbReference type="FunFam" id="3.40.50.620:FF:000114">
    <property type="entry name" value="Pantothenate synthetase"/>
    <property type="match status" value="1"/>
</dbReference>
<dbReference type="Gene3D" id="3.40.50.620">
    <property type="entry name" value="HUPs"/>
    <property type="match status" value="1"/>
</dbReference>
<dbReference type="Gene3D" id="3.30.1300.10">
    <property type="entry name" value="Pantoate-beta-alanine ligase, C-terminal domain"/>
    <property type="match status" value="1"/>
</dbReference>
<dbReference type="HAMAP" id="MF_00158">
    <property type="entry name" value="PanC"/>
    <property type="match status" value="1"/>
</dbReference>
<dbReference type="InterPro" id="IPR003721">
    <property type="entry name" value="Pantoate_ligase"/>
</dbReference>
<dbReference type="InterPro" id="IPR042176">
    <property type="entry name" value="Pantoate_ligase_C"/>
</dbReference>
<dbReference type="InterPro" id="IPR014729">
    <property type="entry name" value="Rossmann-like_a/b/a_fold"/>
</dbReference>
<dbReference type="NCBIfam" id="TIGR00018">
    <property type="entry name" value="panC"/>
    <property type="match status" value="1"/>
</dbReference>
<dbReference type="PANTHER" id="PTHR21299">
    <property type="entry name" value="CYTIDYLATE KINASE/PANTOATE-BETA-ALANINE LIGASE"/>
    <property type="match status" value="1"/>
</dbReference>
<dbReference type="PANTHER" id="PTHR21299:SF1">
    <property type="entry name" value="PANTOATE--BETA-ALANINE LIGASE"/>
    <property type="match status" value="1"/>
</dbReference>
<dbReference type="Pfam" id="PF02569">
    <property type="entry name" value="Pantoate_ligase"/>
    <property type="match status" value="1"/>
</dbReference>
<dbReference type="SUPFAM" id="SSF52374">
    <property type="entry name" value="Nucleotidylyl transferase"/>
    <property type="match status" value="1"/>
</dbReference>
<proteinExistence type="inferred from homology"/>
<name>PANC_MYCSS</name>
<evidence type="ECO:0000255" key="1">
    <source>
        <dbReference type="HAMAP-Rule" id="MF_00158"/>
    </source>
</evidence>
<sequence length="313" mass="33668">MTARRPTRFAKGELNVYRAPRDVTDVTRALRSTGRRVVLVPTMGALHEGHLTLIRAAKRVQGAVVVVSIFVNPLQFGAGEDLDAYPRTLDDDLAALRAEGVEIAFTPTVGDMYPDGTRTSVHPGPLGDDLEGASRPGHFAGVLTVVCKLLHIVRPDRAFFGEKDYQQLVLIRQMVTDLNIDTKIVGVPTVREADGLALSSRNRYLDEVEREQAGALSAALLAGMYAASNGAAATLDAARAVLDEVPAIEVDYLQVRDPMLGPVPHEGAARLLVAARLGQTRLLDNIAVDIGASDGIDGHPRVGSPDHQLPWRN</sequence>